<sequence length="283" mass="32837">MGEYIVTKTLNNNVVVCTNNDQEVILIGKGIGFNKKEGMALNDQTITIEKIYKLESEQQKAHYKSLVEIADDNVLQVIIDSLNFISNTAMNVDSKQLVISLTDHIIFAYKRLKQNQVISNPFVMETMQLYSDAYHIAKQVIDQLNAALDVHFPEDEIGFIALHIASNTEDLSMHEMTLINNVIKKGIDIIESDLVTTVDKESLQYQRFIRHVQFLIRRLRRKEYIHAQDDFVSMIKNHYPICYNTAYKILTMIQKQFDVNISESEIIYLTLHIHHFEERINQS</sequence>
<proteinExistence type="inferred from homology"/>
<accession>Q2YXW0</accession>
<keyword id="KW-0677">Repeat</keyword>
<organism>
    <name type="scientific">Staphylococcus aureus (strain bovine RF122 / ET3-1)</name>
    <dbReference type="NCBI Taxonomy" id="273036"/>
    <lineage>
        <taxon>Bacteria</taxon>
        <taxon>Bacillati</taxon>
        <taxon>Bacillota</taxon>
        <taxon>Bacilli</taxon>
        <taxon>Bacillales</taxon>
        <taxon>Staphylococcaceae</taxon>
        <taxon>Staphylococcus</taxon>
    </lineage>
</organism>
<protein>
    <recommendedName>
        <fullName>Protein GlcT</fullName>
    </recommendedName>
</protein>
<evidence type="ECO:0000255" key="1">
    <source>
        <dbReference type="PROSITE-ProRule" id="PRU00704"/>
    </source>
</evidence>
<evidence type="ECO:0000305" key="2"/>
<dbReference type="EMBL" id="AJ938182">
    <property type="protein sequence ID" value="CAI80903.1"/>
    <property type="molecule type" value="Genomic_DNA"/>
</dbReference>
<dbReference type="RefSeq" id="WP_000505013.1">
    <property type="nucleotide sequence ID" value="NC_007622.1"/>
</dbReference>
<dbReference type="SMR" id="Q2YXW0"/>
<dbReference type="KEGG" id="sab:SAB1214"/>
<dbReference type="HOGENOM" id="CLU_078802_0_0_9"/>
<dbReference type="GO" id="GO:0003723">
    <property type="term" value="F:RNA binding"/>
    <property type="evidence" value="ECO:0007669"/>
    <property type="project" value="InterPro"/>
</dbReference>
<dbReference type="GO" id="GO:0045893">
    <property type="term" value="P:positive regulation of DNA-templated transcription"/>
    <property type="evidence" value="ECO:0007669"/>
    <property type="project" value="InterPro"/>
</dbReference>
<dbReference type="Gene3D" id="1.20.58.1950">
    <property type="match status" value="1"/>
</dbReference>
<dbReference type="Gene3D" id="1.20.890.100">
    <property type="match status" value="1"/>
</dbReference>
<dbReference type="Gene3D" id="2.30.24.10">
    <property type="entry name" value="CAT RNA-binding domain"/>
    <property type="match status" value="1"/>
</dbReference>
<dbReference type="Gene3D" id="1.10.1790.10">
    <property type="entry name" value="PRD domain"/>
    <property type="match status" value="1"/>
</dbReference>
<dbReference type="InterPro" id="IPR050661">
    <property type="entry name" value="BglG_antiterminators"/>
</dbReference>
<dbReference type="InterPro" id="IPR004341">
    <property type="entry name" value="CAT_RNA-bd_dom"/>
</dbReference>
<dbReference type="InterPro" id="IPR036650">
    <property type="entry name" value="CAT_RNA-bd_dom_sf"/>
</dbReference>
<dbReference type="InterPro" id="IPR011608">
    <property type="entry name" value="PRD"/>
</dbReference>
<dbReference type="InterPro" id="IPR036634">
    <property type="entry name" value="PRD_sf"/>
</dbReference>
<dbReference type="InterPro" id="IPR001550">
    <property type="entry name" value="Transcrpt_antitermin_CS"/>
</dbReference>
<dbReference type="NCBIfam" id="NF047357">
    <property type="entry name" value="antiterm_GlcT"/>
    <property type="match status" value="1"/>
</dbReference>
<dbReference type="PANTHER" id="PTHR30185">
    <property type="entry name" value="CRYPTIC BETA-GLUCOSIDE BGL OPERON ANTITERMINATOR"/>
    <property type="match status" value="1"/>
</dbReference>
<dbReference type="PANTHER" id="PTHR30185:SF16">
    <property type="entry name" value="PROTEIN GLCT"/>
    <property type="match status" value="1"/>
</dbReference>
<dbReference type="Pfam" id="PF03123">
    <property type="entry name" value="CAT_RBD"/>
    <property type="match status" value="1"/>
</dbReference>
<dbReference type="Pfam" id="PF00874">
    <property type="entry name" value="PRD"/>
    <property type="match status" value="2"/>
</dbReference>
<dbReference type="SMART" id="SM01061">
    <property type="entry name" value="CAT_RBD"/>
    <property type="match status" value="1"/>
</dbReference>
<dbReference type="SUPFAM" id="SSF63520">
    <property type="entry name" value="PTS-regulatory domain, PRD"/>
    <property type="match status" value="2"/>
</dbReference>
<dbReference type="SUPFAM" id="SSF50151">
    <property type="entry name" value="SacY-like RNA-binding domain"/>
    <property type="match status" value="1"/>
</dbReference>
<dbReference type="PROSITE" id="PS00654">
    <property type="entry name" value="PRD_1"/>
    <property type="match status" value="1"/>
</dbReference>
<dbReference type="PROSITE" id="PS51372">
    <property type="entry name" value="PRD_2"/>
    <property type="match status" value="2"/>
</dbReference>
<comment type="similarity">
    <text evidence="2">Belongs to the transcriptional antiterminator BglG family. GlcT subfamily.</text>
</comment>
<gene>
    <name type="primary">glcT</name>
    <name type="ordered locus">SAB1214</name>
</gene>
<feature type="chain" id="PRO_0000352605" description="Protein GlcT">
    <location>
        <begin position="1"/>
        <end position="283"/>
    </location>
</feature>
<feature type="domain" description="PRD 1" evidence="1">
    <location>
        <begin position="69"/>
        <end position="173"/>
    </location>
</feature>
<feature type="domain" description="PRD 2" evidence="1">
    <location>
        <begin position="174"/>
        <end position="283"/>
    </location>
</feature>
<reference key="1">
    <citation type="journal article" date="2007" name="PLoS ONE">
        <title>Molecular correlates of host specialization in Staphylococcus aureus.</title>
        <authorList>
            <person name="Herron-Olson L."/>
            <person name="Fitzgerald J.R."/>
            <person name="Musser J.M."/>
            <person name="Kapur V."/>
        </authorList>
    </citation>
    <scope>NUCLEOTIDE SEQUENCE [LARGE SCALE GENOMIC DNA]</scope>
    <source>
        <strain>bovine RF122 / ET3-1</strain>
    </source>
</reference>
<name>GLCT_STAAB</name>